<comment type="function">
    <text evidence="1">With CysN forms the ATP sulfurylase (ATPS) that catalyzes the adenylation of sulfate producing adenosine 5'-phosphosulfate (APS) and diphosphate, the first enzymatic step in sulfur assimilation pathway. APS synthesis involves the formation of a high-energy phosphoric-sulfuric acid anhydride bond driven by GTP hydrolysis by CysN coupled to ATP hydrolysis by CysD.</text>
</comment>
<comment type="catalytic activity">
    <reaction evidence="1">
        <text>sulfate + ATP + H(+) = adenosine 5'-phosphosulfate + diphosphate</text>
        <dbReference type="Rhea" id="RHEA:18133"/>
        <dbReference type="ChEBI" id="CHEBI:15378"/>
        <dbReference type="ChEBI" id="CHEBI:16189"/>
        <dbReference type="ChEBI" id="CHEBI:30616"/>
        <dbReference type="ChEBI" id="CHEBI:33019"/>
        <dbReference type="ChEBI" id="CHEBI:58243"/>
        <dbReference type="EC" id="2.7.7.4"/>
    </reaction>
</comment>
<comment type="pathway">
    <text evidence="1">Sulfur metabolism; hydrogen sulfide biosynthesis; sulfite from sulfate: step 1/3.</text>
</comment>
<comment type="subunit">
    <text evidence="1">Heterodimer composed of CysD, the smaller subunit, and CysN.</text>
</comment>
<comment type="similarity">
    <text evidence="1">Belongs to the PAPS reductase family. CysD subfamily.</text>
</comment>
<reference key="1">
    <citation type="journal article" date="2008" name="BMC Genomics">
        <title>The genome of Aeromonas salmonicida subsp. salmonicida A449: insights into the evolution of a fish pathogen.</title>
        <authorList>
            <person name="Reith M.E."/>
            <person name="Singh R.K."/>
            <person name="Curtis B."/>
            <person name="Boyd J.M."/>
            <person name="Bouevitch A."/>
            <person name="Kimball J."/>
            <person name="Munholland J."/>
            <person name="Murphy C."/>
            <person name="Sarty D."/>
            <person name="Williams J."/>
            <person name="Nash J.H."/>
            <person name="Johnson S.C."/>
            <person name="Brown L.L."/>
        </authorList>
    </citation>
    <scope>NUCLEOTIDE SEQUENCE [LARGE SCALE GENOMIC DNA]</scope>
    <source>
        <strain>A449</strain>
    </source>
</reference>
<keyword id="KW-0067">ATP-binding</keyword>
<keyword id="KW-0547">Nucleotide-binding</keyword>
<keyword id="KW-0548">Nucleotidyltransferase</keyword>
<keyword id="KW-0808">Transferase</keyword>
<dbReference type="EC" id="2.7.7.4" evidence="1"/>
<dbReference type="EMBL" id="CP000644">
    <property type="protein sequence ID" value="ABO91491.1"/>
    <property type="molecule type" value="Genomic_DNA"/>
</dbReference>
<dbReference type="SMR" id="A4SRG9"/>
<dbReference type="STRING" id="29491.GCA_000820065_04516"/>
<dbReference type="KEGG" id="asa:ASA_3523"/>
<dbReference type="eggNOG" id="COG0175">
    <property type="taxonomic scope" value="Bacteria"/>
</dbReference>
<dbReference type="HOGENOM" id="CLU_043026_0_0_6"/>
<dbReference type="UniPathway" id="UPA00140">
    <property type="reaction ID" value="UER00204"/>
</dbReference>
<dbReference type="Proteomes" id="UP000000225">
    <property type="component" value="Chromosome"/>
</dbReference>
<dbReference type="GO" id="GO:0005524">
    <property type="term" value="F:ATP binding"/>
    <property type="evidence" value="ECO:0007669"/>
    <property type="project" value="UniProtKB-KW"/>
</dbReference>
<dbReference type="GO" id="GO:0004781">
    <property type="term" value="F:sulfate adenylyltransferase (ATP) activity"/>
    <property type="evidence" value="ECO:0007669"/>
    <property type="project" value="UniProtKB-UniRule"/>
</dbReference>
<dbReference type="GO" id="GO:0070814">
    <property type="term" value="P:hydrogen sulfide biosynthetic process"/>
    <property type="evidence" value="ECO:0007669"/>
    <property type="project" value="UniProtKB-UniRule"/>
</dbReference>
<dbReference type="GO" id="GO:0000103">
    <property type="term" value="P:sulfate assimilation"/>
    <property type="evidence" value="ECO:0007669"/>
    <property type="project" value="UniProtKB-UniRule"/>
</dbReference>
<dbReference type="CDD" id="cd23946">
    <property type="entry name" value="Sulfate_adenylyltransferase_2"/>
    <property type="match status" value="1"/>
</dbReference>
<dbReference type="FunFam" id="3.40.50.620:FF:000002">
    <property type="entry name" value="Sulfate adenylyltransferase subunit 2"/>
    <property type="match status" value="1"/>
</dbReference>
<dbReference type="Gene3D" id="3.40.50.620">
    <property type="entry name" value="HUPs"/>
    <property type="match status" value="1"/>
</dbReference>
<dbReference type="HAMAP" id="MF_00064">
    <property type="entry name" value="Sulf_adenylyltr_sub2"/>
    <property type="match status" value="1"/>
</dbReference>
<dbReference type="InterPro" id="IPR002500">
    <property type="entry name" value="PAPS_reduct_dom"/>
</dbReference>
<dbReference type="InterPro" id="IPR014729">
    <property type="entry name" value="Rossmann-like_a/b/a_fold"/>
</dbReference>
<dbReference type="InterPro" id="IPR011784">
    <property type="entry name" value="SO4_adenylTrfase_ssu"/>
</dbReference>
<dbReference type="InterPro" id="IPR050128">
    <property type="entry name" value="Sulfate_adenylyltrnsfr_sub2"/>
</dbReference>
<dbReference type="NCBIfam" id="TIGR02039">
    <property type="entry name" value="CysD"/>
    <property type="match status" value="1"/>
</dbReference>
<dbReference type="NCBIfam" id="NF003587">
    <property type="entry name" value="PRK05253.1"/>
    <property type="match status" value="1"/>
</dbReference>
<dbReference type="NCBIfam" id="NF009214">
    <property type="entry name" value="PRK12563.1"/>
    <property type="match status" value="1"/>
</dbReference>
<dbReference type="PANTHER" id="PTHR43196">
    <property type="entry name" value="SULFATE ADENYLYLTRANSFERASE SUBUNIT 2"/>
    <property type="match status" value="1"/>
</dbReference>
<dbReference type="PANTHER" id="PTHR43196:SF1">
    <property type="entry name" value="SULFATE ADENYLYLTRANSFERASE SUBUNIT 2"/>
    <property type="match status" value="1"/>
</dbReference>
<dbReference type="Pfam" id="PF01507">
    <property type="entry name" value="PAPS_reduct"/>
    <property type="match status" value="1"/>
</dbReference>
<dbReference type="PIRSF" id="PIRSF002936">
    <property type="entry name" value="CysDAde_trans"/>
    <property type="match status" value="1"/>
</dbReference>
<dbReference type="SUPFAM" id="SSF52402">
    <property type="entry name" value="Adenine nucleotide alpha hydrolases-like"/>
    <property type="match status" value="1"/>
</dbReference>
<proteinExistence type="inferred from homology"/>
<feature type="chain" id="PRO_0000340174" description="Sulfate adenylyltransferase subunit 2">
    <location>
        <begin position="1"/>
        <end position="309"/>
    </location>
</feature>
<accession>A4SRG9</accession>
<protein>
    <recommendedName>
        <fullName evidence="1">Sulfate adenylyltransferase subunit 2</fullName>
        <ecNumber evidence="1">2.7.7.4</ecNumber>
    </recommendedName>
    <alternativeName>
        <fullName evidence="1">ATP-sulfurylase small subunit</fullName>
    </alternativeName>
    <alternativeName>
        <fullName evidence="1">Sulfate adenylate transferase</fullName>
        <shortName evidence="1">SAT</shortName>
    </alternativeName>
</protein>
<name>CYSD_AERS4</name>
<gene>
    <name evidence="1" type="primary">cysD</name>
    <name type="ordered locus">ASA_3523</name>
</gene>
<organism>
    <name type="scientific">Aeromonas salmonicida (strain A449)</name>
    <dbReference type="NCBI Taxonomy" id="382245"/>
    <lineage>
        <taxon>Bacteria</taxon>
        <taxon>Pseudomonadati</taxon>
        <taxon>Pseudomonadota</taxon>
        <taxon>Gammaproteobacteria</taxon>
        <taxon>Aeromonadales</taxon>
        <taxon>Aeromonadaceae</taxon>
        <taxon>Aeromonas</taxon>
    </lineage>
</organism>
<evidence type="ECO:0000255" key="1">
    <source>
        <dbReference type="HAMAP-Rule" id="MF_00064"/>
    </source>
</evidence>
<sequence length="309" mass="35710">MESIRAGVSRERLTHLQQLEAESIHIIREVAAEFENPVMMYSIGKDSSVMLHLARKAFYPGKIPFPLLHVDTDWKFKEMITFRDETAKKYGLDLIVHKNPDGLAMGINPFVHGSGKHTDIMKTEGLKQALNQHGFDAAFGGARRDEEKSRAKERVYSFRDKSHRWDPKNQRPELWRVYNSQVNKGESIRVFPLSNWTELDIWQYIYLENIDIVPLYFAAVRPVVERNGIKIMVDDERMPIGPEDEVKQELVRFRTLGCYPLTGAIESDATTLPEIIEEMLLTTSSERQGRLIDHDQAGSMEQKKRQGYF</sequence>